<organism>
    <name type="scientific">Saccharomyces cerevisiae (strain ATCC 204508 / S288c)</name>
    <name type="common">Baker's yeast</name>
    <dbReference type="NCBI Taxonomy" id="559292"/>
    <lineage>
        <taxon>Eukaryota</taxon>
        <taxon>Fungi</taxon>
        <taxon>Dikarya</taxon>
        <taxon>Ascomycota</taxon>
        <taxon>Saccharomycotina</taxon>
        <taxon>Saccharomycetes</taxon>
        <taxon>Saccharomycetales</taxon>
        <taxon>Saccharomycetaceae</taxon>
        <taxon>Saccharomyces</taxon>
    </lineage>
</organism>
<accession>P53241</accession>
<accession>D6VUJ9</accession>
<name>VHT1_YEAST</name>
<reference key="1">
    <citation type="journal article" date="1997" name="Nature">
        <title>The nucleotide sequence of Saccharomyces cerevisiae chromosome VII.</title>
        <authorList>
            <person name="Tettelin H."/>
            <person name="Agostoni-Carbone M.L."/>
            <person name="Albermann K."/>
            <person name="Albers M."/>
            <person name="Arroyo J."/>
            <person name="Backes U."/>
            <person name="Barreiros T."/>
            <person name="Bertani I."/>
            <person name="Bjourson A.J."/>
            <person name="Brueckner M."/>
            <person name="Bruschi C.V."/>
            <person name="Carignani G."/>
            <person name="Castagnoli L."/>
            <person name="Cerdan E."/>
            <person name="Clemente M.L."/>
            <person name="Coblenz A."/>
            <person name="Coglievina M."/>
            <person name="Coissac E."/>
            <person name="Defoor E."/>
            <person name="Del Bino S."/>
            <person name="Delius H."/>
            <person name="Delneri D."/>
            <person name="de Wergifosse P."/>
            <person name="Dujon B."/>
            <person name="Durand P."/>
            <person name="Entian K.-D."/>
            <person name="Eraso P."/>
            <person name="Escribano V."/>
            <person name="Fabiani L."/>
            <person name="Fartmann B."/>
            <person name="Feroli F."/>
            <person name="Feuermann M."/>
            <person name="Frontali L."/>
            <person name="Garcia-Gonzalez M."/>
            <person name="Garcia-Saez M.I."/>
            <person name="Goffeau A."/>
            <person name="Guerreiro P."/>
            <person name="Hani J."/>
            <person name="Hansen M."/>
            <person name="Hebling U."/>
            <person name="Hernandez K."/>
            <person name="Heumann K."/>
            <person name="Hilger F."/>
            <person name="Hofmann B."/>
            <person name="Indge K.J."/>
            <person name="James C.M."/>
            <person name="Klima R."/>
            <person name="Koetter P."/>
            <person name="Kramer B."/>
            <person name="Kramer W."/>
            <person name="Lauquin G."/>
            <person name="Leuther H."/>
            <person name="Louis E.J."/>
            <person name="Maillier E."/>
            <person name="Marconi A."/>
            <person name="Martegani E."/>
            <person name="Mazon M.J."/>
            <person name="Mazzoni C."/>
            <person name="McReynolds A.D.K."/>
            <person name="Melchioretto P."/>
            <person name="Mewes H.-W."/>
            <person name="Minenkova O."/>
            <person name="Mueller-Auer S."/>
            <person name="Nawrocki A."/>
            <person name="Netter P."/>
            <person name="Neu R."/>
            <person name="Nombela C."/>
            <person name="Oliver S.G."/>
            <person name="Panzeri L."/>
            <person name="Paoluzi S."/>
            <person name="Plevani P."/>
            <person name="Portetelle D."/>
            <person name="Portillo F."/>
            <person name="Potier S."/>
            <person name="Purnelle B."/>
            <person name="Rieger M."/>
            <person name="Riles L."/>
            <person name="Rinaldi T."/>
            <person name="Robben J."/>
            <person name="Rodrigues-Pousada C."/>
            <person name="Rodriguez-Belmonte E."/>
            <person name="Rodriguez-Torres A.M."/>
            <person name="Rose M."/>
            <person name="Ruzzi M."/>
            <person name="Saliola M."/>
            <person name="Sanchez-Perez M."/>
            <person name="Schaefer B."/>
            <person name="Schaefer M."/>
            <person name="Scharfe M."/>
            <person name="Schmidheini T."/>
            <person name="Schreer A."/>
            <person name="Skala J."/>
            <person name="Souciet J.-L."/>
            <person name="Steensma H.Y."/>
            <person name="Talla E."/>
            <person name="Thierry A."/>
            <person name="Vandenbol M."/>
            <person name="van der Aart Q.J.M."/>
            <person name="Van Dyck L."/>
            <person name="Vanoni M."/>
            <person name="Verhasselt P."/>
            <person name="Voet M."/>
            <person name="Volckaert G."/>
            <person name="Wambutt R."/>
            <person name="Watson M.D."/>
            <person name="Weber N."/>
            <person name="Wedler E."/>
            <person name="Wedler H."/>
            <person name="Wipfli P."/>
            <person name="Wolf K."/>
            <person name="Wright L.F."/>
            <person name="Zaccaria P."/>
            <person name="Zimmermann M."/>
            <person name="Zollner A."/>
            <person name="Kleine K."/>
        </authorList>
    </citation>
    <scope>NUCLEOTIDE SEQUENCE [LARGE SCALE GENOMIC DNA]</scope>
    <source>
        <strain>ATCC 204508 / S288c</strain>
    </source>
</reference>
<reference key="2">
    <citation type="journal article" date="2014" name="G3 (Bethesda)">
        <title>The reference genome sequence of Saccharomyces cerevisiae: Then and now.</title>
        <authorList>
            <person name="Engel S.R."/>
            <person name="Dietrich F.S."/>
            <person name="Fisk D.G."/>
            <person name="Binkley G."/>
            <person name="Balakrishnan R."/>
            <person name="Costanzo M.C."/>
            <person name="Dwight S.S."/>
            <person name="Hitz B.C."/>
            <person name="Karra K."/>
            <person name="Nash R.S."/>
            <person name="Weng S."/>
            <person name="Wong E.D."/>
            <person name="Lloyd P."/>
            <person name="Skrzypek M.S."/>
            <person name="Miyasato S.R."/>
            <person name="Simison M."/>
            <person name="Cherry J.M."/>
        </authorList>
    </citation>
    <scope>GENOME REANNOTATION</scope>
    <source>
        <strain>ATCC 204508 / S288c</strain>
    </source>
</reference>
<reference key="3">
    <citation type="journal article" date="1999" name="J. Biol. Chem.">
        <title>Identification of the plasma membrane H+-biotin symporter of Saccharomyces cerevisiae by rescue of a fatty acid-auxotrophic mutant.</title>
        <authorList>
            <person name="Stolz J."/>
            <person name="Hoja U."/>
            <person name="Meier S."/>
            <person name="Sauer N."/>
            <person name="Schweizer E."/>
        </authorList>
    </citation>
    <scope>CHARACTERIZATION</scope>
</reference>
<reference key="4">
    <citation type="journal article" date="2006" name="Proc. Natl. Acad. Sci. U.S.A.">
        <title>A global topology map of the Saccharomyces cerevisiae membrane proteome.</title>
        <authorList>
            <person name="Kim H."/>
            <person name="Melen K."/>
            <person name="Oesterberg M."/>
            <person name="von Heijne G."/>
        </authorList>
    </citation>
    <scope>TOPOLOGY [LARGE SCALE ANALYSIS]</scope>
    <source>
        <strain>ATCC 208353 / W303-1A</strain>
    </source>
</reference>
<reference key="5">
    <citation type="journal article" date="2009" name="Science">
        <title>Global analysis of Cdk1 substrate phosphorylation sites provides insights into evolution.</title>
        <authorList>
            <person name="Holt L.J."/>
            <person name="Tuch B.B."/>
            <person name="Villen J."/>
            <person name="Johnson A.D."/>
            <person name="Gygi S.P."/>
            <person name="Morgan D.O."/>
        </authorList>
    </citation>
    <scope>PHOSPHORYLATION [LARGE SCALE ANALYSIS] AT SER-32; SER-33 AND SER-43</scope>
    <scope>IDENTIFICATION BY MASS SPECTROMETRY [LARGE SCALE ANALYSIS]</scope>
</reference>
<comment type="function">
    <text>Involved in uptake of biotin with the concomitant entry of protons.</text>
</comment>
<comment type="subcellular location">
    <subcellularLocation>
        <location>Cell membrane</location>
        <topology>Multi-pass membrane protein</topology>
    </subcellularLocation>
</comment>
<comment type="similarity">
    <text evidence="2">Belongs to the major facilitator superfamily. Allantoate permease family.</text>
</comment>
<feature type="chain" id="PRO_0000121372" description="Vitamin H transporter">
    <location>
        <begin position="1"/>
        <end position="593"/>
    </location>
</feature>
<feature type="topological domain" description="Extracellular" evidence="1">
    <location>
        <begin position="1"/>
        <end position="121"/>
    </location>
</feature>
<feature type="transmembrane region" description="Helical" evidence="1">
    <location>
        <begin position="122"/>
        <end position="142"/>
    </location>
</feature>
<feature type="topological domain" description="Cytoplasmic" evidence="1">
    <location>
        <begin position="143"/>
        <end position="166"/>
    </location>
</feature>
<feature type="transmembrane region" description="Helical" evidence="1">
    <location>
        <begin position="167"/>
        <end position="187"/>
    </location>
</feature>
<feature type="topological domain" description="Extracellular" evidence="1">
    <location>
        <begin position="188"/>
        <end position="190"/>
    </location>
</feature>
<feature type="transmembrane region" description="Helical" evidence="1">
    <location>
        <begin position="191"/>
        <end position="211"/>
    </location>
</feature>
<feature type="topological domain" description="Cytoplasmic" evidence="1">
    <location>
        <begin position="212"/>
        <end position="224"/>
    </location>
</feature>
<feature type="transmembrane region" description="Helical" evidence="1">
    <location>
        <begin position="225"/>
        <end position="245"/>
    </location>
</feature>
<feature type="topological domain" description="Extracellular" evidence="1">
    <location>
        <begin position="246"/>
        <end position="291"/>
    </location>
</feature>
<feature type="transmembrane region" description="Helical" evidence="1">
    <location>
        <begin position="292"/>
        <end position="312"/>
    </location>
</feature>
<feature type="topological domain" description="Cytoplasmic" evidence="1">
    <location>
        <begin position="313"/>
        <end position="361"/>
    </location>
</feature>
<feature type="transmembrane region" description="Helical" evidence="1">
    <location>
        <begin position="362"/>
        <end position="382"/>
    </location>
</feature>
<feature type="topological domain" description="Extracellular" evidence="1">
    <location>
        <begin position="383"/>
        <end position="408"/>
    </location>
</feature>
<feature type="transmembrane region" description="Helical" evidence="1">
    <location>
        <begin position="409"/>
        <end position="429"/>
    </location>
</feature>
<feature type="topological domain" description="Cytoplasmic" evidence="1">
    <location>
        <begin position="430"/>
        <end position="432"/>
    </location>
</feature>
<feature type="transmembrane region" description="Helical" evidence="1">
    <location>
        <begin position="433"/>
        <end position="453"/>
    </location>
</feature>
<feature type="topological domain" description="Extracellular" evidence="1">
    <location>
        <begin position="454"/>
        <end position="460"/>
    </location>
</feature>
<feature type="transmembrane region" description="Helical" evidence="1">
    <location>
        <begin position="461"/>
        <end position="481"/>
    </location>
</feature>
<feature type="topological domain" description="Cytoplasmic" evidence="1">
    <location>
        <begin position="482"/>
        <end position="492"/>
    </location>
</feature>
<feature type="transmembrane region" description="Helical" evidence="1">
    <location>
        <begin position="493"/>
        <end position="513"/>
    </location>
</feature>
<feature type="topological domain" description="Extracellular" evidence="1">
    <location>
        <begin position="514"/>
        <end position="526"/>
    </location>
</feature>
<feature type="transmembrane region" description="Helical" evidence="1">
    <location>
        <begin position="527"/>
        <end position="547"/>
    </location>
</feature>
<feature type="topological domain" description="Cytoplasmic" evidence="1">
    <location>
        <begin position="548"/>
        <end position="593"/>
    </location>
</feature>
<feature type="modified residue" description="Phosphoserine" evidence="3">
    <location>
        <position position="32"/>
    </location>
</feature>
<feature type="modified residue" description="Phosphoserine" evidence="3">
    <location>
        <position position="33"/>
    </location>
</feature>
<feature type="modified residue" description="Phosphoserine" evidence="3">
    <location>
        <position position="43"/>
    </location>
</feature>
<gene>
    <name type="primary">VHT1</name>
    <name type="ordered locus">YGR065C</name>
</gene>
<sequence length="593" mass="69083">MTISNKSWRSYFPHLRKLPEDDQYLYSDDTNSSIIAEEELHHSVDKSSKTDVTAETTAVEPHPHNLRHDLPYEVRDEAGRKWWKYFDEFEYRVNKEYKKSRKWYEFLYPNHTTQTKAERRLLYKLDIIIALYFFMLCWSKSVDLNNYTNAYVSNMKEDLNMKGNDYVYTSTIANVGAIVFQLPFMYLLPRFPSHIILPVMDLGWTWFTFACYRANSLAELRAYRFILSAFGAAYYPVSQYILGCWYAPDEINSRVCLFFCGQQLGSVTSGLLQSRIFKSLNGVHGLAGWRWMFLIDAIAISLPTAIIGFFVIPGVPSKCYSLFLTDEEIRIARARNKRNQIKDGVDKSKLAPLWSRKLWKKVFCTPAFWVLVVFDTCSWNNMTAYSGSYTLWLKSNTKYSIAQVNNLSVIPACLGFAYVIFCAFGADLFRCKWIFMVFAAIMNTVSCALLIKWDIPSKAKWYAFFTTYFSVAASPCLWSFINDFLRFDPQVKAITWIAIYSFSQSTYAWIPTLAWPTVESPRFKTGYTVSLIFGAIYGLWTFVVLFFYKRNEKKHALGNGIILYDSNKGEELPEFVKKNMEERDGYYYLKRSS</sequence>
<keyword id="KW-0092">Biotin</keyword>
<keyword id="KW-1003">Cell membrane</keyword>
<keyword id="KW-0472">Membrane</keyword>
<keyword id="KW-0597">Phosphoprotein</keyword>
<keyword id="KW-1185">Reference proteome</keyword>
<keyword id="KW-0769">Symport</keyword>
<keyword id="KW-0812">Transmembrane</keyword>
<keyword id="KW-1133">Transmembrane helix</keyword>
<keyword id="KW-0813">Transport</keyword>
<protein>
    <recommendedName>
        <fullName>Vitamin H transporter</fullName>
    </recommendedName>
    <alternativeName>
        <fullName>H(+)/biotin symporter</fullName>
    </alternativeName>
</protein>
<evidence type="ECO:0000255" key="1"/>
<evidence type="ECO:0000305" key="2"/>
<evidence type="ECO:0007744" key="3">
    <source>
    </source>
</evidence>
<proteinExistence type="evidence at protein level"/>
<dbReference type="EMBL" id="Z72850">
    <property type="protein sequence ID" value="CAA97067.1"/>
    <property type="molecule type" value="Genomic_DNA"/>
</dbReference>
<dbReference type="EMBL" id="BK006941">
    <property type="protein sequence ID" value="DAA08160.1"/>
    <property type="molecule type" value="Genomic_DNA"/>
</dbReference>
<dbReference type="PIR" id="S64360">
    <property type="entry name" value="S64360"/>
</dbReference>
<dbReference type="RefSeq" id="NP_011579.1">
    <property type="nucleotide sequence ID" value="NM_001181194.1"/>
</dbReference>
<dbReference type="BioGRID" id="33309">
    <property type="interactions" value="237"/>
</dbReference>
<dbReference type="DIP" id="DIP-5519N"/>
<dbReference type="FunCoup" id="P53241">
    <property type="interactions" value="60"/>
</dbReference>
<dbReference type="IntAct" id="P53241">
    <property type="interactions" value="16"/>
</dbReference>
<dbReference type="MINT" id="P53241"/>
<dbReference type="STRING" id="4932.YGR065C"/>
<dbReference type="TCDB" id="2.A.1.14.12">
    <property type="family name" value="the major facilitator superfamily (mfs)"/>
</dbReference>
<dbReference type="iPTMnet" id="P53241"/>
<dbReference type="PaxDb" id="4932-YGR065C"/>
<dbReference type="PeptideAtlas" id="P53241"/>
<dbReference type="EnsemblFungi" id="YGR065C_mRNA">
    <property type="protein sequence ID" value="YGR065C"/>
    <property type="gene ID" value="YGR065C"/>
</dbReference>
<dbReference type="GeneID" id="852956"/>
<dbReference type="KEGG" id="sce:YGR065C"/>
<dbReference type="AGR" id="SGD:S000003297"/>
<dbReference type="SGD" id="S000003297">
    <property type="gene designation" value="VHT1"/>
</dbReference>
<dbReference type="VEuPathDB" id="FungiDB:YGR065C"/>
<dbReference type="eggNOG" id="KOG2533">
    <property type="taxonomic scope" value="Eukaryota"/>
</dbReference>
<dbReference type="HOGENOM" id="CLU_001265_4_2_1"/>
<dbReference type="InParanoid" id="P53241"/>
<dbReference type="OMA" id="AHESEPQ"/>
<dbReference type="OrthoDB" id="3639251at2759"/>
<dbReference type="BioCyc" id="YEAST:G3O-30779-MONOMER"/>
<dbReference type="BioGRID-ORCS" id="852956">
    <property type="hits" value="4 hits in 10 CRISPR screens"/>
</dbReference>
<dbReference type="PRO" id="PR:P53241"/>
<dbReference type="Proteomes" id="UP000002311">
    <property type="component" value="Chromosome VII"/>
</dbReference>
<dbReference type="RNAct" id="P53241">
    <property type="molecule type" value="protein"/>
</dbReference>
<dbReference type="GO" id="GO:0071944">
    <property type="term" value="C:cell periphery"/>
    <property type="evidence" value="ECO:0007005"/>
    <property type="project" value="SGD"/>
</dbReference>
<dbReference type="GO" id="GO:0016020">
    <property type="term" value="C:membrane"/>
    <property type="evidence" value="ECO:0000318"/>
    <property type="project" value="GO_Central"/>
</dbReference>
<dbReference type="GO" id="GO:0005886">
    <property type="term" value="C:plasma membrane"/>
    <property type="evidence" value="ECO:0000314"/>
    <property type="project" value="SGD"/>
</dbReference>
<dbReference type="GO" id="GO:0015225">
    <property type="term" value="F:biotin transmembrane transporter activity"/>
    <property type="evidence" value="ECO:0000314"/>
    <property type="project" value="SGD"/>
</dbReference>
<dbReference type="GO" id="GO:0015293">
    <property type="term" value="F:symporter activity"/>
    <property type="evidence" value="ECO:0007669"/>
    <property type="project" value="UniProtKB-KW"/>
</dbReference>
<dbReference type="GO" id="GO:0022857">
    <property type="term" value="F:transmembrane transporter activity"/>
    <property type="evidence" value="ECO:0000318"/>
    <property type="project" value="GO_Central"/>
</dbReference>
<dbReference type="GO" id="GO:0015878">
    <property type="term" value="P:biotin transport"/>
    <property type="evidence" value="ECO:0000314"/>
    <property type="project" value="SGD"/>
</dbReference>
<dbReference type="CDD" id="cd17327">
    <property type="entry name" value="MFS_FEN2_like"/>
    <property type="match status" value="1"/>
</dbReference>
<dbReference type="FunFam" id="1.20.1250.20:FF:000065">
    <property type="entry name" value="Putative MFS pantothenate transporter"/>
    <property type="match status" value="1"/>
</dbReference>
<dbReference type="Gene3D" id="1.20.1250.20">
    <property type="entry name" value="MFS general substrate transporter like domains"/>
    <property type="match status" value="1"/>
</dbReference>
<dbReference type="InterPro" id="IPR011701">
    <property type="entry name" value="MFS"/>
</dbReference>
<dbReference type="InterPro" id="IPR036259">
    <property type="entry name" value="MFS_trans_sf"/>
</dbReference>
<dbReference type="PANTHER" id="PTHR43791">
    <property type="entry name" value="PERMEASE-RELATED"/>
    <property type="match status" value="1"/>
</dbReference>
<dbReference type="PANTHER" id="PTHR43791:SF31">
    <property type="entry name" value="VITAMIN H TRANSPORTER"/>
    <property type="match status" value="1"/>
</dbReference>
<dbReference type="Pfam" id="PF07690">
    <property type="entry name" value="MFS_1"/>
    <property type="match status" value="1"/>
</dbReference>
<dbReference type="SUPFAM" id="SSF103473">
    <property type="entry name" value="MFS general substrate transporter"/>
    <property type="match status" value="1"/>
</dbReference>